<sequence>MAEEHSNQRSQTFNGERTNRPSRKPRGDGERRGRRQGGRRRVDYLAVNHIDYVDYKDTELLQRFIADNGKILPRRITGTSSKNQRKIATAIKRARIMALLPFVANN</sequence>
<reference key="1">
    <citation type="journal article" date="2006" name="Proc. Natl. Acad. Sci. U.S.A.">
        <title>Comparative genomics of the lactic acid bacteria.</title>
        <authorList>
            <person name="Makarova K.S."/>
            <person name="Slesarev A."/>
            <person name="Wolf Y.I."/>
            <person name="Sorokin A."/>
            <person name="Mirkin B."/>
            <person name="Koonin E.V."/>
            <person name="Pavlov A."/>
            <person name="Pavlova N."/>
            <person name="Karamychev V."/>
            <person name="Polouchine N."/>
            <person name="Shakhova V."/>
            <person name="Grigoriev I."/>
            <person name="Lou Y."/>
            <person name="Rohksar D."/>
            <person name="Lucas S."/>
            <person name="Huang K."/>
            <person name="Goodstein D.M."/>
            <person name="Hawkins T."/>
            <person name="Plengvidhya V."/>
            <person name="Welker D."/>
            <person name="Hughes J."/>
            <person name="Goh Y."/>
            <person name="Benson A."/>
            <person name="Baldwin K."/>
            <person name="Lee J.-H."/>
            <person name="Diaz-Muniz I."/>
            <person name="Dosti B."/>
            <person name="Smeianov V."/>
            <person name="Wechter W."/>
            <person name="Barabote R."/>
            <person name="Lorca G."/>
            <person name="Altermann E."/>
            <person name="Barrangou R."/>
            <person name="Ganesan B."/>
            <person name="Xie Y."/>
            <person name="Rawsthorne H."/>
            <person name="Tamir D."/>
            <person name="Parker C."/>
            <person name="Breidt F."/>
            <person name="Broadbent J.R."/>
            <person name="Hutkins R."/>
            <person name="O'Sullivan D."/>
            <person name="Steele J."/>
            <person name="Unlu G."/>
            <person name="Saier M.H. Jr."/>
            <person name="Klaenhammer T."/>
            <person name="Richardson P."/>
            <person name="Kozyavkin S."/>
            <person name="Weimer B.C."/>
            <person name="Mills D.A."/>
        </authorList>
    </citation>
    <scope>NUCLEOTIDE SEQUENCE [LARGE SCALE GENOMIC DNA]</scope>
    <source>
        <strain>ATCC BAA-331 / PSU-1</strain>
    </source>
</reference>
<keyword id="KW-1185">Reference proteome</keyword>
<keyword id="KW-0687">Ribonucleoprotein</keyword>
<keyword id="KW-0689">Ribosomal protein</keyword>
<keyword id="KW-0694">RNA-binding</keyword>
<keyword id="KW-0699">rRNA-binding</keyword>
<name>RS18_OENOB</name>
<accession>Q04HQ5</accession>
<comment type="function">
    <text evidence="1">Binds as a heterodimer with protein bS6 to the central domain of the 16S rRNA, where it helps stabilize the platform of the 30S subunit.</text>
</comment>
<comment type="subunit">
    <text evidence="1">Part of the 30S ribosomal subunit. Forms a tight heterodimer with protein bS6.</text>
</comment>
<comment type="similarity">
    <text evidence="1">Belongs to the bacterial ribosomal protein bS18 family.</text>
</comment>
<organism>
    <name type="scientific">Oenococcus oeni (strain ATCC BAA-331 / PSU-1)</name>
    <dbReference type="NCBI Taxonomy" id="203123"/>
    <lineage>
        <taxon>Bacteria</taxon>
        <taxon>Bacillati</taxon>
        <taxon>Bacillota</taxon>
        <taxon>Bacilli</taxon>
        <taxon>Lactobacillales</taxon>
        <taxon>Lactobacillaceae</taxon>
        <taxon>Oenococcus</taxon>
    </lineage>
</organism>
<dbReference type="EMBL" id="CP000411">
    <property type="protein sequence ID" value="ABJ56017.1"/>
    <property type="molecule type" value="Genomic_DNA"/>
</dbReference>
<dbReference type="RefSeq" id="WP_002817941.1">
    <property type="nucleotide sequence ID" value="NC_008528.1"/>
</dbReference>
<dbReference type="SMR" id="Q04HQ5"/>
<dbReference type="STRING" id="203123.OEOE_0012"/>
<dbReference type="GeneID" id="75064864"/>
<dbReference type="KEGG" id="ooe:OEOE_0012"/>
<dbReference type="eggNOG" id="COG0238">
    <property type="taxonomic scope" value="Bacteria"/>
</dbReference>
<dbReference type="HOGENOM" id="CLU_148710_0_3_9"/>
<dbReference type="Proteomes" id="UP000000774">
    <property type="component" value="Chromosome"/>
</dbReference>
<dbReference type="GO" id="GO:0022627">
    <property type="term" value="C:cytosolic small ribosomal subunit"/>
    <property type="evidence" value="ECO:0007669"/>
    <property type="project" value="TreeGrafter"/>
</dbReference>
<dbReference type="GO" id="GO:0070181">
    <property type="term" value="F:small ribosomal subunit rRNA binding"/>
    <property type="evidence" value="ECO:0007669"/>
    <property type="project" value="TreeGrafter"/>
</dbReference>
<dbReference type="GO" id="GO:0003735">
    <property type="term" value="F:structural constituent of ribosome"/>
    <property type="evidence" value="ECO:0007669"/>
    <property type="project" value="InterPro"/>
</dbReference>
<dbReference type="GO" id="GO:0006412">
    <property type="term" value="P:translation"/>
    <property type="evidence" value="ECO:0007669"/>
    <property type="project" value="UniProtKB-UniRule"/>
</dbReference>
<dbReference type="Gene3D" id="4.10.640.10">
    <property type="entry name" value="Ribosomal protein S18"/>
    <property type="match status" value="1"/>
</dbReference>
<dbReference type="HAMAP" id="MF_00270">
    <property type="entry name" value="Ribosomal_bS18"/>
    <property type="match status" value="1"/>
</dbReference>
<dbReference type="InterPro" id="IPR001648">
    <property type="entry name" value="Ribosomal_bS18"/>
</dbReference>
<dbReference type="InterPro" id="IPR036870">
    <property type="entry name" value="Ribosomal_bS18_sf"/>
</dbReference>
<dbReference type="NCBIfam" id="TIGR00165">
    <property type="entry name" value="S18"/>
    <property type="match status" value="1"/>
</dbReference>
<dbReference type="PANTHER" id="PTHR13479">
    <property type="entry name" value="30S RIBOSOMAL PROTEIN S18"/>
    <property type="match status" value="1"/>
</dbReference>
<dbReference type="PANTHER" id="PTHR13479:SF40">
    <property type="entry name" value="SMALL RIBOSOMAL SUBUNIT PROTEIN BS18M"/>
    <property type="match status" value="1"/>
</dbReference>
<dbReference type="Pfam" id="PF01084">
    <property type="entry name" value="Ribosomal_S18"/>
    <property type="match status" value="1"/>
</dbReference>
<dbReference type="PRINTS" id="PR00974">
    <property type="entry name" value="RIBOSOMALS18"/>
</dbReference>
<dbReference type="SUPFAM" id="SSF46911">
    <property type="entry name" value="Ribosomal protein S18"/>
    <property type="match status" value="1"/>
</dbReference>
<protein>
    <recommendedName>
        <fullName evidence="1">Small ribosomal subunit protein bS18</fullName>
    </recommendedName>
    <alternativeName>
        <fullName evidence="3">30S ribosomal protein S18</fullName>
    </alternativeName>
</protein>
<feature type="chain" id="PRO_1000003551" description="Small ribosomal subunit protein bS18">
    <location>
        <begin position="1"/>
        <end position="106"/>
    </location>
</feature>
<feature type="region of interest" description="Disordered" evidence="2">
    <location>
        <begin position="1"/>
        <end position="41"/>
    </location>
</feature>
<proteinExistence type="inferred from homology"/>
<gene>
    <name evidence="1" type="primary">rpsR</name>
    <name type="ordered locus">OEOE_0012</name>
</gene>
<evidence type="ECO:0000255" key="1">
    <source>
        <dbReference type="HAMAP-Rule" id="MF_00270"/>
    </source>
</evidence>
<evidence type="ECO:0000256" key="2">
    <source>
        <dbReference type="SAM" id="MobiDB-lite"/>
    </source>
</evidence>
<evidence type="ECO:0000305" key="3"/>